<dbReference type="EMBL" id="CP000822">
    <property type="protein sequence ID" value="ABV11419.1"/>
    <property type="molecule type" value="Genomic_DNA"/>
</dbReference>
<dbReference type="RefSeq" id="WP_012131250.1">
    <property type="nucleotide sequence ID" value="NC_009792.1"/>
</dbReference>
<dbReference type="SMR" id="A8AD56"/>
<dbReference type="STRING" id="290338.CKO_00255"/>
<dbReference type="GeneID" id="45134538"/>
<dbReference type="KEGG" id="cko:CKO_00255"/>
<dbReference type="HOGENOM" id="CLU_005965_2_1_6"/>
<dbReference type="OrthoDB" id="9766019at2"/>
<dbReference type="Proteomes" id="UP000008148">
    <property type="component" value="Chromosome"/>
</dbReference>
<dbReference type="GO" id="GO:0005524">
    <property type="term" value="F:ATP binding"/>
    <property type="evidence" value="ECO:0007669"/>
    <property type="project" value="UniProtKB-KW"/>
</dbReference>
<dbReference type="GO" id="GO:0016887">
    <property type="term" value="F:ATP hydrolysis activity"/>
    <property type="evidence" value="ECO:0007669"/>
    <property type="project" value="UniProtKB-UniRule"/>
</dbReference>
<dbReference type="GO" id="GO:0140662">
    <property type="term" value="F:ATP-dependent protein folding chaperone"/>
    <property type="evidence" value="ECO:0007669"/>
    <property type="project" value="InterPro"/>
</dbReference>
<dbReference type="GO" id="GO:0051082">
    <property type="term" value="F:unfolded protein binding"/>
    <property type="evidence" value="ECO:0007669"/>
    <property type="project" value="InterPro"/>
</dbReference>
<dbReference type="GO" id="GO:0016226">
    <property type="term" value="P:iron-sulfur cluster assembly"/>
    <property type="evidence" value="ECO:0007669"/>
    <property type="project" value="InterPro"/>
</dbReference>
<dbReference type="CDD" id="cd10236">
    <property type="entry name" value="ASKHA_NBD_HSP70_HscA"/>
    <property type="match status" value="1"/>
</dbReference>
<dbReference type="FunFam" id="1.20.1270.10:FF:000006">
    <property type="entry name" value="Chaperone protein HscA"/>
    <property type="match status" value="1"/>
</dbReference>
<dbReference type="FunFam" id="3.30.420.40:FF:000046">
    <property type="entry name" value="Chaperone protein HscA"/>
    <property type="match status" value="1"/>
</dbReference>
<dbReference type="FunFam" id="3.90.640.10:FF:000013">
    <property type="entry name" value="Chaperone protein HscA"/>
    <property type="match status" value="1"/>
</dbReference>
<dbReference type="FunFam" id="2.60.34.10:FF:000005">
    <property type="entry name" value="Chaperone protein HscA homolog"/>
    <property type="match status" value="1"/>
</dbReference>
<dbReference type="Gene3D" id="1.20.1270.10">
    <property type="match status" value="1"/>
</dbReference>
<dbReference type="Gene3D" id="3.30.420.40">
    <property type="match status" value="2"/>
</dbReference>
<dbReference type="Gene3D" id="3.90.640.10">
    <property type="entry name" value="Actin, Chain A, domain 4"/>
    <property type="match status" value="1"/>
</dbReference>
<dbReference type="Gene3D" id="2.60.34.10">
    <property type="entry name" value="Substrate Binding Domain Of DNAk, Chain A, domain 1"/>
    <property type="match status" value="1"/>
</dbReference>
<dbReference type="HAMAP" id="MF_00679">
    <property type="entry name" value="HscA"/>
    <property type="match status" value="1"/>
</dbReference>
<dbReference type="InterPro" id="IPR043129">
    <property type="entry name" value="ATPase_NBD"/>
</dbReference>
<dbReference type="InterPro" id="IPR018181">
    <property type="entry name" value="Heat_shock_70_CS"/>
</dbReference>
<dbReference type="InterPro" id="IPR042039">
    <property type="entry name" value="HscA_NBD"/>
</dbReference>
<dbReference type="InterPro" id="IPR029048">
    <property type="entry name" value="HSP70_C_sf"/>
</dbReference>
<dbReference type="InterPro" id="IPR029047">
    <property type="entry name" value="HSP70_peptide-bd_sf"/>
</dbReference>
<dbReference type="InterPro" id="IPR013126">
    <property type="entry name" value="Hsp_70_fam"/>
</dbReference>
<dbReference type="InterPro" id="IPR010236">
    <property type="entry name" value="ISC_FeS_clus_asmbl_HscA"/>
</dbReference>
<dbReference type="NCBIfam" id="TIGR01991">
    <property type="entry name" value="HscA"/>
    <property type="match status" value="1"/>
</dbReference>
<dbReference type="NCBIfam" id="NF003520">
    <property type="entry name" value="PRK05183.1"/>
    <property type="match status" value="1"/>
</dbReference>
<dbReference type="PANTHER" id="PTHR19375">
    <property type="entry name" value="HEAT SHOCK PROTEIN 70KDA"/>
    <property type="match status" value="1"/>
</dbReference>
<dbReference type="Pfam" id="PF00012">
    <property type="entry name" value="HSP70"/>
    <property type="match status" value="1"/>
</dbReference>
<dbReference type="PRINTS" id="PR00301">
    <property type="entry name" value="HEATSHOCK70"/>
</dbReference>
<dbReference type="SUPFAM" id="SSF53067">
    <property type="entry name" value="Actin-like ATPase domain"/>
    <property type="match status" value="2"/>
</dbReference>
<dbReference type="SUPFAM" id="SSF100934">
    <property type="entry name" value="Heat shock protein 70kD (HSP70), C-terminal subdomain"/>
    <property type="match status" value="1"/>
</dbReference>
<dbReference type="SUPFAM" id="SSF100920">
    <property type="entry name" value="Heat shock protein 70kD (HSP70), peptide-binding domain"/>
    <property type="match status" value="1"/>
</dbReference>
<dbReference type="PROSITE" id="PS00297">
    <property type="entry name" value="HSP70_1"/>
    <property type="match status" value="1"/>
</dbReference>
<dbReference type="PROSITE" id="PS00329">
    <property type="entry name" value="HSP70_2"/>
    <property type="match status" value="1"/>
</dbReference>
<dbReference type="PROSITE" id="PS01036">
    <property type="entry name" value="HSP70_3"/>
    <property type="match status" value="1"/>
</dbReference>
<organism>
    <name type="scientific">Citrobacter koseri (strain ATCC BAA-895 / CDC 4225-83 / SGSC4696)</name>
    <dbReference type="NCBI Taxonomy" id="290338"/>
    <lineage>
        <taxon>Bacteria</taxon>
        <taxon>Pseudomonadati</taxon>
        <taxon>Pseudomonadota</taxon>
        <taxon>Gammaproteobacteria</taxon>
        <taxon>Enterobacterales</taxon>
        <taxon>Enterobacteriaceae</taxon>
        <taxon>Citrobacter</taxon>
    </lineage>
</organism>
<feature type="chain" id="PRO_1000044854" description="Chaperone protein HscA">
    <location>
        <begin position="1"/>
        <end position="616"/>
    </location>
</feature>
<proteinExistence type="inferred from homology"/>
<protein>
    <recommendedName>
        <fullName evidence="1">Chaperone protein HscA</fullName>
    </recommendedName>
    <alternativeName>
        <fullName evidence="1">Hsc66</fullName>
    </alternativeName>
</protein>
<evidence type="ECO:0000255" key="1">
    <source>
        <dbReference type="HAMAP-Rule" id="MF_00679"/>
    </source>
</evidence>
<reference key="1">
    <citation type="submission" date="2007-08" db="EMBL/GenBank/DDBJ databases">
        <authorList>
            <consortium name="The Citrobacter koseri Genome Sequencing Project"/>
            <person name="McClelland M."/>
            <person name="Sanderson E.K."/>
            <person name="Porwollik S."/>
            <person name="Spieth J."/>
            <person name="Clifton W.S."/>
            <person name="Latreille P."/>
            <person name="Courtney L."/>
            <person name="Wang C."/>
            <person name="Pepin K."/>
            <person name="Bhonagiri V."/>
            <person name="Nash W."/>
            <person name="Johnson M."/>
            <person name="Thiruvilangam P."/>
            <person name="Wilson R."/>
        </authorList>
    </citation>
    <scope>NUCLEOTIDE SEQUENCE [LARGE SCALE GENOMIC DNA]</scope>
    <source>
        <strain>ATCC BAA-895 / CDC 4225-83 / SGSC4696</strain>
    </source>
</reference>
<comment type="function">
    <text evidence="1">Chaperone involved in the maturation of iron-sulfur cluster-containing proteins. Has a low intrinsic ATPase activity which is markedly stimulated by HscB. Involved in the maturation of IscU.</text>
</comment>
<comment type="similarity">
    <text evidence="1">Belongs to the heat shock protein 70 family.</text>
</comment>
<gene>
    <name evidence="1" type="primary">hscA</name>
    <name type="ordered locus">CKO_00255</name>
</gene>
<accession>A8AD56</accession>
<name>HSCA_CITK8</name>
<keyword id="KW-0067">ATP-binding</keyword>
<keyword id="KW-0143">Chaperone</keyword>
<keyword id="KW-0547">Nucleotide-binding</keyword>
<keyword id="KW-1185">Reference proteome</keyword>
<sequence length="616" mass="65531">MALLQISEPGLSAAPHQRRLAAGIDLGTTNSLVATVRSGQAETLADHDGRHLLPSVVHYQQQGHTVGYAARANAAQDTANTISSVKRMMGRSLADIQTRYPHLPYQFQASENGLPMIETAAGLLNPVRISADILKALAARATEALSGELDGVVITVPAYFDDAQRQGTKDAARLAGLHVLRLLNEPTAAAIAYGLDSGKEGVIAVYDLGGGTFDISILRLSRGVFEVLATGGDSALGGDDFDHLLADYIREQAGIADRSDNRVQRELLDAAIAAKIALSDADSVSVNVAGWQGDITREQFNDLIAALVKRTLMACRRALKDAGVEAQEVLEVVMVGGSTRVPLVRERVGEFFGRPPLTAIDPDKVVAIGAAIQADILVGNKPDSEMLLLDVIPLSLGLETMGGLVEKVIPRNTTIPVARAQDFTTFKDGQTAMSIHVMQGERELVQDCRSLARFALRGLPAMPAGGAHIRVTFQVDADGLLSVTAMEKSTGVEASIQVKPSYGLTDSEIATMIQDSMSFAEQDVKARMLAEQKVEAARVLESLTGALAADAALLSAAERQVIDDAAAHLSEVAQSDDGDAIEQAIKNVDKQTQEFAARRMDKSVRRALQGHSVDEV</sequence>